<protein>
    <recommendedName>
        <fullName>Probable pectin lyase E</fullName>
        <shortName>PLE</shortName>
        <ecNumber>4.2.2.10</ecNumber>
    </recommendedName>
</protein>
<keyword id="KW-0119">Carbohydrate metabolism</keyword>
<keyword id="KW-0961">Cell wall biogenesis/degradation</keyword>
<keyword id="KW-1015">Disulfide bond</keyword>
<keyword id="KW-0325">Glycoprotein</keyword>
<keyword id="KW-0456">Lyase</keyword>
<keyword id="KW-0624">Polysaccharide degradation</keyword>
<keyword id="KW-0964">Secreted</keyword>
<keyword id="KW-0732">Signal</keyword>
<reference key="1">
    <citation type="journal article" date="2008" name="PLoS Genet.">
        <title>Genomic islands in the pathogenic filamentous fungus Aspergillus fumigatus.</title>
        <authorList>
            <person name="Fedorova N.D."/>
            <person name="Khaldi N."/>
            <person name="Joardar V.S."/>
            <person name="Maiti R."/>
            <person name="Amedeo P."/>
            <person name="Anderson M.J."/>
            <person name="Crabtree J."/>
            <person name="Silva J.C."/>
            <person name="Badger J.H."/>
            <person name="Albarraq A."/>
            <person name="Angiuoli S."/>
            <person name="Bussey H."/>
            <person name="Bowyer P."/>
            <person name="Cotty P.J."/>
            <person name="Dyer P.S."/>
            <person name="Egan A."/>
            <person name="Galens K."/>
            <person name="Fraser-Liggett C.M."/>
            <person name="Haas B.J."/>
            <person name="Inman J.M."/>
            <person name="Kent R."/>
            <person name="Lemieux S."/>
            <person name="Malavazi I."/>
            <person name="Orvis J."/>
            <person name="Roemer T."/>
            <person name="Ronning C.M."/>
            <person name="Sundaram J.P."/>
            <person name="Sutton G."/>
            <person name="Turner G."/>
            <person name="Venter J.C."/>
            <person name="White O.R."/>
            <person name="Whitty B.R."/>
            <person name="Youngman P."/>
            <person name="Wolfe K.H."/>
            <person name="Goldman G.H."/>
            <person name="Wortman J.R."/>
            <person name="Jiang B."/>
            <person name="Denning D.W."/>
            <person name="Nierman W.C."/>
        </authorList>
    </citation>
    <scope>NUCLEOTIDE SEQUENCE [LARGE SCALE GENOMIC DNA]</scope>
    <source>
        <strain>CBS 144.89 / FGSC A1163 / CEA10</strain>
    </source>
</reference>
<organism>
    <name type="scientific">Aspergillus fumigatus (strain CBS 144.89 / FGSC A1163 / CEA10)</name>
    <name type="common">Neosartorya fumigata</name>
    <dbReference type="NCBI Taxonomy" id="451804"/>
    <lineage>
        <taxon>Eukaryota</taxon>
        <taxon>Fungi</taxon>
        <taxon>Dikarya</taxon>
        <taxon>Ascomycota</taxon>
        <taxon>Pezizomycotina</taxon>
        <taxon>Eurotiomycetes</taxon>
        <taxon>Eurotiomycetidae</taxon>
        <taxon>Eurotiales</taxon>
        <taxon>Aspergillaceae</taxon>
        <taxon>Aspergillus</taxon>
        <taxon>Aspergillus subgen. Fumigati</taxon>
    </lineage>
</organism>
<comment type="function">
    <text evidence="1">Pectinolytic enzymes consist of four classes of enzymes: pectin lyase, polygalacturonase, pectin methylesterase and rhamnogalacturonase. Among pectinolytic enzymes, pectin lyase is the most important in depolymerization of pectin, since it cleaves internal glycosidic bonds of highly methylated pectins (By similarity).</text>
</comment>
<comment type="catalytic activity">
    <reaction>
        <text>Eliminative cleavage of (1-&gt;4)-alpha-D-galacturonan methyl ester to give oligosaccharides with 4-deoxy-6-O-methyl-alpha-D-galact-4-enuronosyl groups at their non-reducing ends.</text>
        <dbReference type="EC" id="4.2.2.10"/>
    </reaction>
</comment>
<comment type="subcellular location">
    <subcellularLocation>
        <location evidence="1">Secreted</location>
    </subcellularLocation>
</comment>
<comment type="similarity">
    <text evidence="3">Belongs to the polysaccharide lyase 1 family.</text>
</comment>
<accession>B0Y0L8</accession>
<proteinExistence type="inferred from homology"/>
<sequence>MKTAVLSLFLALQTYARVTGSPSGFAAGTTGGGSATPAAPSSLDELVQWITDDKPRVILIDRTWDFIGTEGTTTGKCCSMPSTTVCSGGTSKGQAWIQDHCDGGSWVSCKYDNAALTPLDVGSNKSIVGVGNKGVIKGKGLRVRNGNKNVIIQNIHITNLNPQYVWGGDAITLDNADKVWIDHNKISLIGRQFIVSGWGKAGHVTISNNEFDGRTSWSAGCNGKHYWTLLLLGEQDYYTFQGNWLHDVSGRAPHMGTDHTKSQIFFHGVNNYFQNVGGHAFDVDTNTWVLLEGNYFENVNTPLTDTSLRAGGKLYTTSTVAAAGACQDKLGYICEWNRLAGSGAWKDRTDADVKTKAAAFKSSLVGHYPVADVPAKVVANAGVGKL</sequence>
<gene>
    <name type="primary">pelE</name>
    <name type="ORF">AFUB_057770</name>
</gene>
<feature type="signal peptide" evidence="2">
    <location>
        <begin position="1"/>
        <end position="16"/>
    </location>
</feature>
<feature type="chain" id="PRO_0000394356" description="Probable pectin lyase E">
    <location>
        <begin position="17"/>
        <end position="386"/>
    </location>
</feature>
<feature type="active site" evidence="2">
    <location>
        <position position="251"/>
    </location>
</feature>
<feature type="glycosylation site" description="N-linked (GlcNAc...) asparagine" evidence="2">
    <location>
        <position position="124"/>
    </location>
</feature>
<feature type="disulfide bond" evidence="1">
    <location>
        <begin position="77"/>
        <end position="101"/>
    </location>
</feature>
<feature type="disulfide bond" evidence="1">
    <location>
        <begin position="326"/>
        <end position="334"/>
    </location>
</feature>
<name>PELF_ASPFC</name>
<evidence type="ECO:0000250" key="1"/>
<evidence type="ECO:0000255" key="2"/>
<evidence type="ECO:0000305" key="3"/>
<dbReference type="EC" id="4.2.2.10"/>
<dbReference type="EMBL" id="DS499597">
    <property type="protein sequence ID" value="EDP51759.1"/>
    <property type="molecule type" value="Genomic_DNA"/>
</dbReference>
<dbReference type="SMR" id="B0Y0L8"/>
<dbReference type="GlyCosmos" id="B0Y0L8">
    <property type="glycosylation" value="1 site, No reported glycans"/>
</dbReference>
<dbReference type="EnsemblFungi" id="EDP51759">
    <property type="protein sequence ID" value="EDP51759"/>
    <property type="gene ID" value="AFUB_057770"/>
</dbReference>
<dbReference type="VEuPathDB" id="FungiDB:AFUB_057770"/>
<dbReference type="HOGENOM" id="CLU_021980_0_1_1"/>
<dbReference type="OrthoDB" id="105940at5052"/>
<dbReference type="PhylomeDB" id="B0Y0L8"/>
<dbReference type="Proteomes" id="UP000001699">
    <property type="component" value="Unassembled WGS sequence"/>
</dbReference>
<dbReference type="GO" id="GO:0005576">
    <property type="term" value="C:extracellular region"/>
    <property type="evidence" value="ECO:0007669"/>
    <property type="project" value="UniProtKB-SubCell"/>
</dbReference>
<dbReference type="GO" id="GO:0030570">
    <property type="term" value="F:pectate lyase activity"/>
    <property type="evidence" value="ECO:0007669"/>
    <property type="project" value="InterPro"/>
</dbReference>
<dbReference type="GO" id="GO:0047490">
    <property type="term" value="F:pectin lyase activity"/>
    <property type="evidence" value="ECO:0000250"/>
    <property type="project" value="UniProtKB"/>
</dbReference>
<dbReference type="GO" id="GO:0071555">
    <property type="term" value="P:cell wall organization"/>
    <property type="evidence" value="ECO:0007669"/>
    <property type="project" value="UniProtKB-KW"/>
</dbReference>
<dbReference type="GO" id="GO:0045490">
    <property type="term" value="P:pectin catabolic process"/>
    <property type="evidence" value="ECO:0000250"/>
    <property type="project" value="UniProtKB"/>
</dbReference>
<dbReference type="FunFam" id="2.160.20.10:FF:000003">
    <property type="entry name" value="Pectin lyase F"/>
    <property type="match status" value="1"/>
</dbReference>
<dbReference type="Gene3D" id="2.160.20.10">
    <property type="entry name" value="Single-stranded right-handed beta-helix, Pectin lyase-like"/>
    <property type="match status" value="1"/>
</dbReference>
<dbReference type="InterPro" id="IPR002022">
    <property type="entry name" value="Pec_lyase"/>
</dbReference>
<dbReference type="InterPro" id="IPR012334">
    <property type="entry name" value="Pectin_lyas_fold"/>
</dbReference>
<dbReference type="InterPro" id="IPR011050">
    <property type="entry name" value="Pectin_lyase_fold/virulence"/>
</dbReference>
<dbReference type="InterPro" id="IPR045032">
    <property type="entry name" value="PEL"/>
</dbReference>
<dbReference type="PANTHER" id="PTHR31683">
    <property type="entry name" value="PECTATE LYASE 18-RELATED"/>
    <property type="match status" value="1"/>
</dbReference>
<dbReference type="PANTHER" id="PTHR31683:SF67">
    <property type="entry name" value="PECTIN LYASE F-RELATED"/>
    <property type="match status" value="1"/>
</dbReference>
<dbReference type="Pfam" id="PF00544">
    <property type="entry name" value="Pectate_lyase_4"/>
    <property type="match status" value="1"/>
</dbReference>
<dbReference type="SMART" id="SM00656">
    <property type="entry name" value="Amb_all"/>
    <property type="match status" value="1"/>
</dbReference>
<dbReference type="SUPFAM" id="SSF51126">
    <property type="entry name" value="Pectin lyase-like"/>
    <property type="match status" value="1"/>
</dbReference>